<comment type="function">
    <text evidence="2">Catalyzes the formation of N(7)-methylguanine at position 46 (m7G46) in tRNA.</text>
</comment>
<comment type="catalytic activity">
    <reaction evidence="2">
        <text>guanosine(46) in tRNA + S-adenosyl-L-methionine = N(7)-methylguanosine(46) in tRNA + S-adenosyl-L-homocysteine</text>
        <dbReference type="Rhea" id="RHEA:42708"/>
        <dbReference type="Rhea" id="RHEA-COMP:10188"/>
        <dbReference type="Rhea" id="RHEA-COMP:10189"/>
        <dbReference type="ChEBI" id="CHEBI:57856"/>
        <dbReference type="ChEBI" id="CHEBI:59789"/>
        <dbReference type="ChEBI" id="CHEBI:74269"/>
        <dbReference type="ChEBI" id="CHEBI:74480"/>
        <dbReference type="EC" id="2.1.1.33"/>
    </reaction>
</comment>
<comment type="pathway">
    <text evidence="2">tRNA modification; N(7)-methylguanine-tRNA biosynthesis.</text>
</comment>
<comment type="similarity">
    <text evidence="2">Belongs to the class I-like SAM-binding methyltransferase superfamily. TrmB family.</text>
</comment>
<proteinExistence type="inferred from homology"/>
<keyword id="KW-0489">Methyltransferase</keyword>
<keyword id="KW-0949">S-adenosyl-L-methionine</keyword>
<keyword id="KW-0808">Transferase</keyword>
<keyword id="KW-0819">tRNA processing</keyword>
<reference key="1">
    <citation type="journal article" date="2003" name="Nature">
        <title>Genome divergence in two Prochlorococcus ecotypes reflects oceanic niche differentiation.</title>
        <authorList>
            <person name="Rocap G."/>
            <person name="Larimer F.W."/>
            <person name="Lamerdin J.E."/>
            <person name="Malfatti S."/>
            <person name="Chain P."/>
            <person name="Ahlgren N.A."/>
            <person name="Arellano A."/>
            <person name="Coleman M."/>
            <person name="Hauser L."/>
            <person name="Hess W.R."/>
            <person name="Johnson Z.I."/>
            <person name="Land M.L."/>
            <person name="Lindell D."/>
            <person name="Post A.F."/>
            <person name="Regala W."/>
            <person name="Shah M."/>
            <person name="Shaw S.L."/>
            <person name="Steglich C."/>
            <person name="Sullivan M.B."/>
            <person name="Ting C.S."/>
            <person name="Tolonen A."/>
            <person name="Webb E.A."/>
            <person name="Zinser E.R."/>
            <person name="Chisholm S.W."/>
        </authorList>
    </citation>
    <scope>NUCLEOTIDE SEQUENCE [LARGE SCALE GENOMIC DNA]</scope>
    <source>
        <strain>CCMP1986 / NIES-2087 / MED4</strain>
    </source>
</reference>
<accession>Q7V350</accession>
<name>TRMB_PROMP</name>
<gene>
    <name evidence="2" type="primary">trmB</name>
    <name type="ordered locus">PMM0240</name>
</gene>
<evidence type="ECO:0000250" key="1"/>
<evidence type="ECO:0000255" key="2">
    <source>
        <dbReference type="HAMAP-Rule" id="MF_01057"/>
    </source>
</evidence>
<organism>
    <name type="scientific">Prochlorococcus marinus subsp. pastoris (strain CCMP1986 / NIES-2087 / MED4)</name>
    <dbReference type="NCBI Taxonomy" id="59919"/>
    <lineage>
        <taxon>Bacteria</taxon>
        <taxon>Bacillati</taxon>
        <taxon>Cyanobacteriota</taxon>
        <taxon>Cyanophyceae</taxon>
        <taxon>Synechococcales</taxon>
        <taxon>Prochlorococcaceae</taxon>
        <taxon>Prochlorococcus</taxon>
    </lineage>
</organism>
<dbReference type="EC" id="2.1.1.33" evidence="2"/>
<dbReference type="EMBL" id="BX548174">
    <property type="protein sequence ID" value="CAE18699.1"/>
    <property type="molecule type" value="Genomic_DNA"/>
</dbReference>
<dbReference type="RefSeq" id="WP_011131878.1">
    <property type="nucleotide sequence ID" value="NC_005072.1"/>
</dbReference>
<dbReference type="SMR" id="Q7V350"/>
<dbReference type="STRING" id="59919.PMM0240"/>
<dbReference type="KEGG" id="pmm:PMM0240"/>
<dbReference type="eggNOG" id="COG0220">
    <property type="taxonomic scope" value="Bacteria"/>
</dbReference>
<dbReference type="HOGENOM" id="CLU_050910_1_3_3"/>
<dbReference type="OrthoDB" id="9802090at2"/>
<dbReference type="UniPathway" id="UPA00989"/>
<dbReference type="Proteomes" id="UP000001026">
    <property type="component" value="Chromosome"/>
</dbReference>
<dbReference type="GO" id="GO:0043527">
    <property type="term" value="C:tRNA methyltransferase complex"/>
    <property type="evidence" value="ECO:0007669"/>
    <property type="project" value="TreeGrafter"/>
</dbReference>
<dbReference type="GO" id="GO:0008176">
    <property type="term" value="F:tRNA (guanine(46)-N7)-methyltransferase activity"/>
    <property type="evidence" value="ECO:0007669"/>
    <property type="project" value="UniProtKB-UniRule"/>
</dbReference>
<dbReference type="Gene3D" id="3.40.50.150">
    <property type="entry name" value="Vaccinia Virus protein VP39"/>
    <property type="match status" value="1"/>
</dbReference>
<dbReference type="HAMAP" id="MF_01057">
    <property type="entry name" value="tRNA_methyltr_TrmB"/>
    <property type="match status" value="1"/>
</dbReference>
<dbReference type="InterPro" id="IPR029063">
    <property type="entry name" value="SAM-dependent_MTases_sf"/>
</dbReference>
<dbReference type="InterPro" id="IPR003358">
    <property type="entry name" value="tRNA_(Gua-N-7)_MeTrfase_Trmb"/>
</dbReference>
<dbReference type="InterPro" id="IPR055361">
    <property type="entry name" value="tRNA_methyltr_TrmB_bact"/>
</dbReference>
<dbReference type="NCBIfam" id="TIGR00091">
    <property type="entry name" value="tRNA (guanosine(46)-N7)-methyltransferase TrmB"/>
    <property type="match status" value="1"/>
</dbReference>
<dbReference type="PANTHER" id="PTHR23417">
    <property type="entry name" value="3-DEOXY-D-MANNO-OCTULOSONIC-ACID TRANSFERASE/TRNA GUANINE-N 7 - -METHYLTRANSFERASE"/>
    <property type="match status" value="1"/>
</dbReference>
<dbReference type="PANTHER" id="PTHR23417:SF21">
    <property type="entry name" value="TRNA (GUANINE-N(7)-)-METHYLTRANSFERASE"/>
    <property type="match status" value="1"/>
</dbReference>
<dbReference type="Pfam" id="PF02390">
    <property type="entry name" value="Methyltransf_4"/>
    <property type="match status" value="1"/>
</dbReference>
<dbReference type="SUPFAM" id="SSF53335">
    <property type="entry name" value="S-adenosyl-L-methionine-dependent methyltransferases"/>
    <property type="match status" value="1"/>
</dbReference>
<dbReference type="PROSITE" id="PS51625">
    <property type="entry name" value="SAM_MT_TRMB"/>
    <property type="match status" value="1"/>
</dbReference>
<protein>
    <recommendedName>
        <fullName evidence="2">tRNA (guanine-N(7)-)-methyltransferase</fullName>
        <ecNumber evidence="2">2.1.1.33</ecNumber>
    </recommendedName>
    <alternativeName>
        <fullName evidence="2">tRNA (guanine(46)-N(7))-methyltransferase</fullName>
    </alternativeName>
    <alternativeName>
        <fullName evidence="2">tRNA(m7G46)-methyltransferase</fullName>
    </alternativeName>
</protein>
<feature type="chain" id="PRO_0000171375" description="tRNA (guanine-N(7)-)-methyltransferase">
    <location>
        <begin position="1"/>
        <end position="209"/>
    </location>
</feature>
<feature type="active site" evidence="1">
    <location>
        <position position="113"/>
    </location>
</feature>
<feature type="binding site" evidence="2">
    <location>
        <position position="35"/>
    </location>
    <ligand>
        <name>S-adenosyl-L-methionine</name>
        <dbReference type="ChEBI" id="CHEBI:59789"/>
    </ligand>
</feature>
<feature type="binding site" evidence="2">
    <location>
        <position position="60"/>
    </location>
    <ligand>
        <name>S-adenosyl-L-methionine</name>
        <dbReference type="ChEBI" id="CHEBI:59789"/>
    </ligand>
</feature>
<feature type="binding site" evidence="2">
    <location>
        <position position="87"/>
    </location>
    <ligand>
        <name>S-adenosyl-L-methionine</name>
        <dbReference type="ChEBI" id="CHEBI:59789"/>
    </ligand>
</feature>
<feature type="binding site" evidence="2">
    <location>
        <position position="113"/>
    </location>
    <ligand>
        <name>S-adenosyl-L-methionine</name>
        <dbReference type="ChEBI" id="CHEBI:59789"/>
    </ligand>
</feature>
<feature type="binding site" evidence="2">
    <location>
        <position position="117"/>
    </location>
    <ligand>
        <name>substrate</name>
    </ligand>
</feature>
<feature type="binding site" evidence="2">
    <location>
        <position position="149"/>
    </location>
    <ligand>
        <name>substrate</name>
    </ligand>
</feature>
<sequence>MRQHVNPLSKNFFEIDPIPPLNQVFENPKLPLHLDIGCASGEFLFELSLKNKNWNYIGIEIREKLVLNANLKMKSRENKNLYFSFGNANNIFNQTNNKSIINLITSISFNFPDPWFKKKHHKRRVIQPKLLNLLSNSMKKGSLIFIKTDVRDLFDHMELTISESIKFKKIPYQDVDFCESFNPNRIQTNREKYVILNQLKIYESIYKKI</sequence>